<sequence length="142" mass="14875">MAKKVQAYVKLQVAAGMANPSPPVGPALGQQGVNIMEFCKAFNAKTDSIEKGLPIPVVITVYADRSFTFVTKTPPAAVLLKKAAGIKSGSGKPNKDKVGKISRAQLQEIAQTKAADMTGADIEAMTRSIEGTARSMGLVVED</sequence>
<organism>
    <name type="scientific">Salmonella gallinarum (strain 287/91 / NCTC 13346)</name>
    <dbReference type="NCBI Taxonomy" id="550538"/>
    <lineage>
        <taxon>Bacteria</taxon>
        <taxon>Pseudomonadati</taxon>
        <taxon>Pseudomonadota</taxon>
        <taxon>Gammaproteobacteria</taxon>
        <taxon>Enterobacterales</taxon>
        <taxon>Enterobacteriaceae</taxon>
        <taxon>Salmonella</taxon>
    </lineage>
</organism>
<accession>B5RFK5</accession>
<feature type="chain" id="PRO_1000195707" description="Large ribosomal subunit protein uL11">
    <location>
        <begin position="1"/>
        <end position="142"/>
    </location>
</feature>
<protein>
    <recommendedName>
        <fullName evidence="1">Large ribosomal subunit protein uL11</fullName>
    </recommendedName>
    <alternativeName>
        <fullName evidence="2">50S ribosomal protein L11</fullName>
    </alternativeName>
</protein>
<evidence type="ECO:0000255" key="1">
    <source>
        <dbReference type="HAMAP-Rule" id="MF_00736"/>
    </source>
</evidence>
<evidence type="ECO:0000305" key="2"/>
<dbReference type="EMBL" id="AM933173">
    <property type="protein sequence ID" value="CAR39248.1"/>
    <property type="molecule type" value="Genomic_DNA"/>
</dbReference>
<dbReference type="RefSeq" id="WP_001085926.1">
    <property type="nucleotide sequence ID" value="NC_011274.1"/>
</dbReference>
<dbReference type="SMR" id="B5RFK5"/>
<dbReference type="GeneID" id="93777911"/>
<dbReference type="KEGG" id="seg:SG3458"/>
<dbReference type="HOGENOM" id="CLU_074237_2_0_6"/>
<dbReference type="Proteomes" id="UP000008321">
    <property type="component" value="Chromosome"/>
</dbReference>
<dbReference type="GO" id="GO:0022625">
    <property type="term" value="C:cytosolic large ribosomal subunit"/>
    <property type="evidence" value="ECO:0007669"/>
    <property type="project" value="TreeGrafter"/>
</dbReference>
<dbReference type="GO" id="GO:0070180">
    <property type="term" value="F:large ribosomal subunit rRNA binding"/>
    <property type="evidence" value="ECO:0007669"/>
    <property type="project" value="UniProtKB-UniRule"/>
</dbReference>
<dbReference type="GO" id="GO:0003735">
    <property type="term" value="F:structural constituent of ribosome"/>
    <property type="evidence" value="ECO:0007669"/>
    <property type="project" value="InterPro"/>
</dbReference>
<dbReference type="GO" id="GO:0006412">
    <property type="term" value="P:translation"/>
    <property type="evidence" value="ECO:0007669"/>
    <property type="project" value="UniProtKB-UniRule"/>
</dbReference>
<dbReference type="CDD" id="cd00349">
    <property type="entry name" value="Ribosomal_L11"/>
    <property type="match status" value="1"/>
</dbReference>
<dbReference type="FunFam" id="1.10.10.250:FF:000001">
    <property type="entry name" value="50S ribosomal protein L11"/>
    <property type="match status" value="1"/>
</dbReference>
<dbReference type="FunFam" id="3.30.1550.10:FF:000001">
    <property type="entry name" value="50S ribosomal protein L11"/>
    <property type="match status" value="1"/>
</dbReference>
<dbReference type="Gene3D" id="1.10.10.250">
    <property type="entry name" value="Ribosomal protein L11, C-terminal domain"/>
    <property type="match status" value="1"/>
</dbReference>
<dbReference type="Gene3D" id="3.30.1550.10">
    <property type="entry name" value="Ribosomal protein L11/L12, N-terminal domain"/>
    <property type="match status" value="1"/>
</dbReference>
<dbReference type="HAMAP" id="MF_00736">
    <property type="entry name" value="Ribosomal_uL11"/>
    <property type="match status" value="1"/>
</dbReference>
<dbReference type="InterPro" id="IPR000911">
    <property type="entry name" value="Ribosomal_uL11"/>
</dbReference>
<dbReference type="InterPro" id="IPR006519">
    <property type="entry name" value="Ribosomal_uL11_bac-typ"/>
</dbReference>
<dbReference type="InterPro" id="IPR020783">
    <property type="entry name" value="Ribosomal_uL11_C"/>
</dbReference>
<dbReference type="InterPro" id="IPR036769">
    <property type="entry name" value="Ribosomal_uL11_C_sf"/>
</dbReference>
<dbReference type="InterPro" id="IPR020785">
    <property type="entry name" value="Ribosomal_uL11_CS"/>
</dbReference>
<dbReference type="InterPro" id="IPR020784">
    <property type="entry name" value="Ribosomal_uL11_N"/>
</dbReference>
<dbReference type="InterPro" id="IPR036796">
    <property type="entry name" value="Ribosomal_uL11_N_sf"/>
</dbReference>
<dbReference type="NCBIfam" id="TIGR01632">
    <property type="entry name" value="L11_bact"/>
    <property type="match status" value="1"/>
</dbReference>
<dbReference type="PANTHER" id="PTHR11661">
    <property type="entry name" value="60S RIBOSOMAL PROTEIN L12"/>
    <property type="match status" value="1"/>
</dbReference>
<dbReference type="PANTHER" id="PTHR11661:SF1">
    <property type="entry name" value="LARGE RIBOSOMAL SUBUNIT PROTEIN UL11M"/>
    <property type="match status" value="1"/>
</dbReference>
<dbReference type="Pfam" id="PF00298">
    <property type="entry name" value="Ribosomal_L11"/>
    <property type="match status" value="1"/>
</dbReference>
<dbReference type="Pfam" id="PF03946">
    <property type="entry name" value="Ribosomal_L11_N"/>
    <property type="match status" value="1"/>
</dbReference>
<dbReference type="SMART" id="SM00649">
    <property type="entry name" value="RL11"/>
    <property type="match status" value="1"/>
</dbReference>
<dbReference type="SUPFAM" id="SSF54747">
    <property type="entry name" value="Ribosomal L11/L12e N-terminal domain"/>
    <property type="match status" value="1"/>
</dbReference>
<dbReference type="SUPFAM" id="SSF46906">
    <property type="entry name" value="Ribosomal protein L11, C-terminal domain"/>
    <property type="match status" value="1"/>
</dbReference>
<dbReference type="PROSITE" id="PS00359">
    <property type="entry name" value="RIBOSOMAL_L11"/>
    <property type="match status" value="1"/>
</dbReference>
<proteinExistence type="inferred from homology"/>
<comment type="function">
    <text evidence="1">Forms part of the ribosomal stalk which helps the ribosome interact with GTP-bound translation factors.</text>
</comment>
<comment type="subunit">
    <text evidence="1">Part of the ribosomal stalk of the 50S ribosomal subunit. Interacts with L10 and the large rRNA to form the base of the stalk. L10 forms an elongated spine to which L12 dimers bind in a sequential fashion forming a multimeric L10(L12)X complex.</text>
</comment>
<comment type="PTM">
    <text evidence="1">One or more lysine residues are methylated.</text>
</comment>
<comment type="similarity">
    <text evidence="1">Belongs to the universal ribosomal protein uL11 family.</text>
</comment>
<reference key="1">
    <citation type="journal article" date="2008" name="Genome Res.">
        <title>Comparative genome analysis of Salmonella enteritidis PT4 and Salmonella gallinarum 287/91 provides insights into evolutionary and host adaptation pathways.</title>
        <authorList>
            <person name="Thomson N.R."/>
            <person name="Clayton D.J."/>
            <person name="Windhorst D."/>
            <person name="Vernikos G."/>
            <person name="Davidson S."/>
            <person name="Churcher C."/>
            <person name="Quail M.A."/>
            <person name="Stevens M."/>
            <person name="Jones M.A."/>
            <person name="Watson M."/>
            <person name="Barron A."/>
            <person name="Layton A."/>
            <person name="Pickard D."/>
            <person name="Kingsley R.A."/>
            <person name="Bignell A."/>
            <person name="Clark L."/>
            <person name="Harris B."/>
            <person name="Ormond D."/>
            <person name="Abdellah Z."/>
            <person name="Brooks K."/>
            <person name="Cherevach I."/>
            <person name="Chillingworth T."/>
            <person name="Woodward J."/>
            <person name="Norberczak H."/>
            <person name="Lord A."/>
            <person name="Arrowsmith C."/>
            <person name="Jagels K."/>
            <person name="Moule S."/>
            <person name="Mungall K."/>
            <person name="Saunders M."/>
            <person name="Whitehead S."/>
            <person name="Chabalgoity J.A."/>
            <person name="Maskell D."/>
            <person name="Humphreys T."/>
            <person name="Roberts M."/>
            <person name="Barrow P.A."/>
            <person name="Dougan G."/>
            <person name="Parkhill J."/>
        </authorList>
    </citation>
    <scope>NUCLEOTIDE SEQUENCE [LARGE SCALE GENOMIC DNA]</scope>
    <source>
        <strain>287/91 / NCTC 13346</strain>
    </source>
</reference>
<keyword id="KW-0488">Methylation</keyword>
<keyword id="KW-0687">Ribonucleoprotein</keyword>
<keyword id="KW-0689">Ribosomal protein</keyword>
<keyword id="KW-0694">RNA-binding</keyword>
<keyword id="KW-0699">rRNA-binding</keyword>
<name>RL11_SALG2</name>
<gene>
    <name evidence="1" type="primary">rplK</name>
    <name type="ordered locus">SG3458</name>
</gene>